<reference key="1">
    <citation type="journal article" date="1992" name="J. Virol.">
        <title>Primary structure of the herpesvirus saimiri genome.</title>
        <authorList>
            <person name="Albrecht J.-C."/>
            <person name="Nicholas J."/>
            <person name="Biller D."/>
            <person name="Cameron K.R."/>
            <person name="Biesinger B."/>
            <person name="Newman C."/>
            <person name="Wittmann S."/>
            <person name="Craxton M.A."/>
            <person name="Coleman H."/>
            <person name="Fleckenstein B."/>
            <person name="Honess R.W."/>
        </authorList>
    </citation>
    <scope>NUCLEOTIDE SEQUENCE [LARGE SCALE GENOMIC DNA]</scope>
</reference>
<reference key="2">
    <citation type="journal article" date="1990" name="Virology">
        <title>Gene expression in cells infected with gammaherpesvirus saimiri: properties of transcripts from two immediate-early genes.</title>
        <authorList>
            <person name="Nicholas J."/>
            <person name="Smith E.P."/>
            <person name="Coles L."/>
            <person name="Honess R."/>
        </authorList>
    </citation>
    <scope>NUCLEOTIDE SEQUENCE [GENOMIC DNA]</scope>
</reference>
<gene>
    <name type="primary">14</name>
</gene>
<name>VIEG_SHV21</name>
<protein>
    <recommendedName>
        <fullName>Immediate-early protein IE-G</fullName>
    </recommendedName>
</protein>
<organism>
    <name type="scientific">Saimiriine herpesvirus 2 (strain 11)</name>
    <name type="common">SaHV-2</name>
    <name type="synonym">Herpesvirus saimiri</name>
    <dbReference type="NCBI Taxonomy" id="10383"/>
    <lineage>
        <taxon>Viruses</taxon>
        <taxon>Duplodnaviria</taxon>
        <taxon>Heunggongvirae</taxon>
        <taxon>Peploviricota</taxon>
        <taxon>Herviviricetes</taxon>
        <taxon>Herpesvirales</taxon>
        <taxon>Orthoherpesviridae</taxon>
        <taxon>Gammaherpesvirinae</taxon>
        <taxon>Rhadinovirus</taxon>
        <taxon>Rhadinovirus saimiriinegamma2</taxon>
        <taxon>Saimiriine herpesvirus 2</taxon>
    </lineage>
</organism>
<dbReference type="EMBL" id="X64346">
    <property type="protein sequence ID" value="CAA45637.1"/>
    <property type="molecule type" value="Genomic_DNA"/>
</dbReference>
<dbReference type="EMBL" id="M60286">
    <property type="protein sequence ID" value="AAA46155.1"/>
    <property type="molecule type" value="Genomic_DNA"/>
</dbReference>
<dbReference type="SMR" id="Q00997"/>
<dbReference type="KEGG" id="vg:1488257"/>
<dbReference type="Proteomes" id="UP000000587">
    <property type="component" value="Segment"/>
</dbReference>
<dbReference type="InterPro" id="IPR001213">
    <property type="entry name" value="MMTV_SAg"/>
</dbReference>
<dbReference type="Pfam" id="PF01054">
    <property type="entry name" value="MMTV_SAg"/>
    <property type="match status" value="1"/>
</dbReference>
<sequence length="249" mass="28274">MALDLRNLKHLTANFSFRIMIWIMLCLALPTDSKPISTTEAPILNITQSPSLNISSPSTLEPSEPLKNCTTFLDLLWQRLGENASIKDLMLTLQREEVHGRMTTLPSPRPSSKVEEQQLQRPRNLLPTAVGPPHVKYRLYNRLWEAPKGADVNGKPIQFDDPPLPYTGAYNDDGVLMVNINGKHVRFDSLSYWERIKRSGTPWCIKTPSEKAAILKQLLKAEKKCRTTSKRITELEEQIKELEKTSTSP</sequence>
<evidence type="ECO:0000256" key="1">
    <source>
        <dbReference type="SAM" id="MobiDB-lite"/>
    </source>
</evidence>
<keyword id="KW-0244">Early protein</keyword>
<keyword id="KW-1185">Reference proteome</keyword>
<proteinExistence type="predicted"/>
<accession>Q00997</accession>
<feature type="chain" id="PRO_0000116347" description="Immediate-early protein IE-G">
    <location>
        <begin position="1"/>
        <end position="249"/>
    </location>
</feature>
<feature type="region of interest" description="Disordered" evidence="1">
    <location>
        <begin position="101"/>
        <end position="120"/>
    </location>
</feature>
<organismHost>
    <name type="scientific">Saimiri sciureus</name>
    <name type="common">Common squirrel monkey</name>
    <dbReference type="NCBI Taxonomy" id="9521"/>
</organismHost>